<feature type="chain" id="PRO_0000156637" description="Homoserine kinase">
    <location>
        <begin position="1"/>
        <end position="309"/>
    </location>
</feature>
<feature type="binding site" evidence="1">
    <location>
        <begin position="91"/>
        <end position="101"/>
    </location>
    <ligand>
        <name>ATP</name>
        <dbReference type="ChEBI" id="CHEBI:30616"/>
    </ligand>
</feature>
<proteinExistence type="inferred from homology"/>
<evidence type="ECO:0000255" key="1">
    <source>
        <dbReference type="HAMAP-Rule" id="MF_00384"/>
    </source>
</evidence>
<dbReference type="EC" id="2.7.1.39" evidence="1"/>
<dbReference type="EMBL" id="BX936398">
    <property type="protein sequence ID" value="CAH19843.1"/>
    <property type="molecule type" value="Genomic_DNA"/>
</dbReference>
<dbReference type="RefSeq" id="WP_002209238.1">
    <property type="nucleotide sequence ID" value="NZ_CP009712.1"/>
</dbReference>
<dbReference type="SMR" id="Q66ET8"/>
<dbReference type="GeneID" id="96664104"/>
<dbReference type="KEGG" id="ypo:BZ17_1954"/>
<dbReference type="KEGG" id="yps:YPTB0603"/>
<dbReference type="PATRIC" id="fig|273123.14.peg.2079"/>
<dbReference type="UniPathway" id="UPA00050">
    <property type="reaction ID" value="UER00064"/>
</dbReference>
<dbReference type="Proteomes" id="UP000001011">
    <property type="component" value="Chromosome"/>
</dbReference>
<dbReference type="GO" id="GO:0005737">
    <property type="term" value="C:cytoplasm"/>
    <property type="evidence" value="ECO:0007669"/>
    <property type="project" value="UniProtKB-SubCell"/>
</dbReference>
<dbReference type="GO" id="GO:0005524">
    <property type="term" value="F:ATP binding"/>
    <property type="evidence" value="ECO:0007669"/>
    <property type="project" value="UniProtKB-UniRule"/>
</dbReference>
<dbReference type="GO" id="GO:0004413">
    <property type="term" value="F:homoserine kinase activity"/>
    <property type="evidence" value="ECO:0007669"/>
    <property type="project" value="UniProtKB-UniRule"/>
</dbReference>
<dbReference type="GO" id="GO:0009088">
    <property type="term" value="P:threonine biosynthetic process"/>
    <property type="evidence" value="ECO:0007669"/>
    <property type="project" value="UniProtKB-UniRule"/>
</dbReference>
<dbReference type="FunFam" id="3.30.230.10:FF:000020">
    <property type="entry name" value="Homoserine kinase"/>
    <property type="match status" value="1"/>
</dbReference>
<dbReference type="FunFam" id="3.30.70.890:FF:000002">
    <property type="entry name" value="Homoserine kinase"/>
    <property type="match status" value="1"/>
</dbReference>
<dbReference type="Gene3D" id="3.30.230.10">
    <property type="match status" value="1"/>
</dbReference>
<dbReference type="Gene3D" id="3.30.70.890">
    <property type="entry name" value="GHMP kinase, C-terminal domain"/>
    <property type="match status" value="1"/>
</dbReference>
<dbReference type="HAMAP" id="MF_00384">
    <property type="entry name" value="Homoser_kinase"/>
    <property type="match status" value="1"/>
</dbReference>
<dbReference type="InterPro" id="IPR013750">
    <property type="entry name" value="GHMP_kinase_C_dom"/>
</dbReference>
<dbReference type="InterPro" id="IPR036554">
    <property type="entry name" value="GHMP_kinase_C_sf"/>
</dbReference>
<dbReference type="InterPro" id="IPR006204">
    <property type="entry name" value="GHMP_kinase_N_dom"/>
</dbReference>
<dbReference type="InterPro" id="IPR006203">
    <property type="entry name" value="GHMP_knse_ATP-bd_CS"/>
</dbReference>
<dbReference type="InterPro" id="IPR000870">
    <property type="entry name" value="Homoserine_kinase"/>
</dbReference>
<dbReference type="InterPro" id="IPR020568">
    <property type="entry name" value="Ribosomal_Su5_D2-typ_SF"/>
</dbReference>
<dbReference type="InterPro" id="IPR014721">
    <property type="entry name" value="Ribsml_uS5_D2-typ_fold_subgr"/>
</dbReference>
<dbReference type="NCBIfam" id="NF002288">
    <property type="entry name" value="PRK01212.1-4"/>
    <property type="match status" value="1"/>
</dbReference>
<dbReference type="NCBIfam" id="TIGR00191">
    <property type="entry name" value="thrB"/>
    <property type="match status" value="1"/>
</dbReference>
<dbReference type="PANTHER" id="PTHR20861:SF1">
    <property type="entry name" value="HOMOSERINE KINASE"/>
    <property type="match status" value="1"/>
</dbReference>
<dbReference type="PANTHER" id="PTHR20861">
    <property type="entry name" value="HOMOSERINE/4-DIPHOSPHOCYTIDYL-2-C-METHYL-D-ERYTHRITOL KINASE"/>
    <property type="match status" value="1"/>
</dbReference>
<dbReference type="Pfam" id="PF08544">
    <property type="entry name" value="GHMP_kinases_C"/>
    <property type="match status" value="1"/>
</dbReference>
<dbReference type="Pfam" id="PF00288">
    <property type="entry name" value="GHMP_kinases_N"/>
    <property type="match status" value="1"/>
</dbReference>
<dbReference type="PIRSF" id="PIRSF000676">
    <property type="entry name" value="Homoser_kin"/>
    <property type="match status" value="1"/>
</dbReference>
<dbReference type="PRINTS" id="PR00958">
    <property type="entry name" value="HOMSERKINASE"/>
</dbReference>
<dbReference type="SUPFAM" id="SSF55060">
    <property type="entry name" value="GHMP Kinase, C-terminal domain"/>
    <property type="match status" value="1"/>
</dbReference>
<dbReference type="SUPFAM" id="SSF54211">
    <property type="entry name" value="Ribosomal protein S5 domain 2-like"/>
    <property type="match status" value="1"/>
</dbReference>
<dbReference type="PROSITE" id="PS00627">
    <property type="entry name" value="GHMP_KINASES_ATP"/>
    <property type="match status" value="1"/>
</dbReference>
<accession>Q66ET8</accession>
<sequence>MVKIYAPASIGNVSVGFDVLGAAVSPIDGTLLGDCVSVTAAERFSLHNEGRFVSKLPDDPKQNIVYQCWERFCQEMGKEIPVAMVLEKNMPIGSGLGSSACSVVAGLMAMNEFCGQPLDKVTLLGMMGELEGRVSGSIHFDNVAPCYLGGMQLILEQEGYISQDVPGFSDWLWVMAYPGIKVSTAEARAILPAQYRRQDCITHGRNLAGFIHACHTQQPDLAAKMMKDVIAEPYRTQLLPGFAAARQAAQDIGALACGISGSGPTLFAVCNDQATAQRMAGWLQNHYLQNDEGFVHICRLDTAGARLLG</sequence>
<protein>
    <recommendedName>
        <fullName evidence="1">Homoserine kinase</fullName>
        <shortName evidence="1">HK</shortName>
        <shortName evidence="1">HSK</shortName>
        <ecNumber evidence="1">2.7.1.39</ecNumber>
    </recommendedName>
</protein>
<reference key="1">
    <citation type="journal article" date="2004" name="Proc. Natl. Acad. Sci. U.S.A.">
        <title>Insights into the evolution of Yersinia pestis through whole-genome comparison with Yersinia pseudotuberculosis.</title>
        <authorList>
            <person name="Chain P.S.G."/>
            <person name="Carniel E."/>
            <person name="Larimer F.W."/>
            <person name="Lamerdin J."/>
            <person name="Stoutland P.O."/>
            <person name="Regala W.M."/>
            <person name="Georgescu A.M."/>
            <person name="Vergez L.M."/>
            <person name="Land M.L."/>
            <person name="Motin V.L."/>
            <person name="Brubaker R.R."/>
            <person name="Fowler J."/>
            <person name="Hinnebusch J."/>
            <person name="Marceau M."/>
            <person name="Medigue C."/>
            <person name="Simonet M."/>
            <person name="Chenal-Francisque V."/>
            <person name="Souza B."/>
            <person name="Dacheux D."/>
            <person name="Elliott J.M."/>
            <person name="Derbise A."/>
            <person name="Hauser L.J."/>
            <person name="Garcia E."/>
        </authorList>
    </citation>
    <scope>NUCLEOTIDE SEQUENCE [LARGE SCALE GENOMIC DNA]</scope>
    <source>
        <strain>IP32953</strain>
    </source>
</reference>
<name>KHSE_YERPS</name>
<organism>
    <name type="scientific">Yersinia pseudotuberculosis serotype I (strain IP32953)</name>
    <dbReference type="NCBI Taxonomy" id="273123"/>
    <lineage>
        <taxon>Bacteria</taxon>
        <taxon>Pseudomonadati</taxon>
        <taxon>Pseudomonadota</taxon>
        <taxon>Gammaproteobacteria</taxon>
        <taxon>Enterobacterales</taxon>
        <taxon>Yersiniaceae</taxon>
        <taxon>Yersinia</taxon>
    </lineage>
</organism>
<comment type="function">
    <text evidence="1">Catalyzes the ATP-dependent phosphorylation of L-homoserine to L-homoserine phosphate.</text>
</comment>
<comment type="catalytic activity">
    <reaction evidence="1">
        <text>L-homoserine + ATP = O-phospho-L-homoserine + ADP + H(+)</text>
        <dbReference type="Rhea" id="RHEA:13985"/>
        <dbReference type="ChEBI" id="CHEBI:15378"/>
        <dbReference type="ChEBI" id="CHEBI:30616"/>
        <dbReference type="ChEBI" id="CHEBI:57476"/>
        <dbReference type="ChEBI" id="CHEBI:57590"/>
        <dbReference type="ChEBI" id="CHEBI:456216"/>
        <dbReference type="EC" id="2.7.1.39"/>
    </reaction>
</comment>
<comment type="pathway">
    <text evidence="1">Amino-acid biosynthesis; L-threonine biosynthesis; L-threonine from L-aspartate: step 4/5.</text>
</comment>
<comment type="subcellular location">
    <subcellularLocation>
        <location evidence="1">Cytoplasm</location>
    </subcellularLocation>
</comment>
<comment type="similarity">
    <text evidence="1">Belongs to the GHMP kinase family. Homoserine kinase subfamily.</text>
</comment>
<keyword id="KW-0028">Amino-acid biosynthesis</keyword>
<keyword id="KW-0067">ATP-binding</keyword>
<keyword id="KW-0963">Cytoplasm</keyword>
<keyword id="KW-0418">Kinase</keyword>
<keyword id="KW-0547">Nucleotide-binding</keyword>
<keyword id="KW-0791">Threonine biosynthesis</keyword>
<keyword id="KW-0808">Transferase</keyword>
<gene>
    <name evidence="1" type="primary">thrB</name>
    <name type="ordered locus">YPTB0603</name>
</gene>